<protein>
    <recommendedName>
        <fullName evidence="1">GTPase Der</fullName>
    </recommendedName>
    <alternativeName>
        <fullName evidence="1">GTP-binding protein EngA</fullName>
    </alternativeName>
</protein>
<dbReference type="EMBL" id="CR936503">
    <property type="protein sequence ID" value="CAI55318.1"/>
    <property type="molecule type" value="Genomic_DNA"/>
</dbReference>
<dbReference type="RefSeq" id="WP_011374718.1">
    <property type="nucleotide sequence ID" value="NC_007576.1"/>
</dbReference>
<dbReference type="SMR" id="Q38WW3"/>
<dbReference type="STRING" id="314315.LCA_1016"/>
<dbReference type="KEGG" id="lsa:LCA_1016"/>
<dbReference type="eggNOG" id="COG1160">
    <property type="taxonomic scope" value="Bacteria"/>
</dbReference>
<dbReference type="HOGENOM" id="CLU_016077_6_2_9"/>
<dbReference type="OrthoDB" id="9805918at2"/>
<dbReference type="Proteomes" id="UP000002707">
    <property type="component" value="Chromosome"/>
</dbReference>
<dbReference type="GO" id="GO:0005525">
    <property type="term" value="F:GTP binding"/>
    <property type="evidence" value="ECO:0007669"/>
    <property type="project" value="UniProtKB-UniRule"/>
</dbReference>
<dbReference type="GO" id="GO:0043022">
    <property type="term" value="F:ribosome binding"/>
    <property type="evidence" value="ECO:0007669"/>
    <property type="project" value="TreeGrafter"/>
</dbReference>
<dbReference type="GO" id="GO:0042254">
    <property type="term" value="P:ribosome biogenesis"/>
    <property type="evidence" value="ECO:0007669"/>
    <property type="project" value="UniProtKB-KW"/>
</dbReference>
<dbReference type="CDD" id="cd01894">
    <property type="entry name" value="EngA1"/>
    <property type="match status" value="1"/>
</dbReference>
<dbReference type="CDD" id="cd01895">
    <property type="entry name" value="EngA2"/>
    <property type="match status" value="1"/>
</dbReference>
<dbReference type="FunFam" id="3.30.300.20:FF:000004">
    <property type="entry name" value="GTPase Der"/>
    <property type="match status" value="1"/>
</dbReference>
<dbReference type="FunFam" id="3.40.50.300:FF:000040">
    <property type="entry name" value="GTPase Der"/>
    <property type="match status" value="1"/>
</dbReference>
<dbReference type="FunFam" id="3.40.50.300:FF:000057">
    <property type="entry name" value="GTPase Der"/>
    <property type="match status" value="1"/>
</dbReference>
<dbReference type="Gene3D" id="3.30.300.20">
    <property type="match status" value="1"/>
</dbReference>
<dbReference type="Gene3D" id="3.40.50.300">
    <property type="entry name" value="P-loop containing nucleotide triphosphate hydrolases"/>
    <property type="match status" value="2"/>
</dbReference>
<dbReference type="HAMAP" id="MF_00195">
    <property type="entry name" value="GTPase_Der"/>
    <property type="match status" value="1"/>
</dbReference>
<dbReference type="InterPro" id="IPR031166">
    <property type="entry name" value="G_ENGA"/>
</dbReference>
<dbReference type="InterPro" id="IPR006073">
    <property type="entry name" value="GTP-bd"/>
</dbReference>
<dbReference type="InterPro" id="IPR016484">
    <property type="entry name" value="GTPase_Der"/>
</dbReference>
<dbReference type="InterPro" id="IPR032859">
    <property type="entry name" value="KH_dom-like"/>
</dbReference>
<dbReference type="InterPro" id="IPR015946">
    <property type="entry name" value="KH_dom-like_a/b"/>
</dbReference>
<dbReference type="InterPro" id="IPR027417">
    <property type="entry name" value="P-loop_NTPase"/>
</dbReference>
<dbReference type="InterPro" id="IPR005225">
    <property type="entry name" value="Small_GTP-bd"/>
</dbReference>
<dbReference type="NCBIfam" id="TIGR03594">
    <property type="entry name" value="GTPase_EngA"/>
    <property type="match status" value="1"/>
</dbReference>
<dbReference type="NCBIfam" id="TIGR00231">
    <property type="entry name" value="small_GTP"/>
    <property type="match status" value="2"/>
</dbReference>
<dbReference type="PANTHER" id="PTHR43834">
    <property type="entry name" value="GTPASE DER"/>
    <property type="match status" value="1"/>
</dbReference>
<dbReference type="PANTHER" id="PTHR43834:SF6">
    <property type="entry name" value="GTPASE DER"/>
    <property type="match status" value="1"/>
</dbReference>
<dbReference type="Pfam" id="PF14714">
    <property type="entry name" value="KH_dom-like"/>
    <property type="match status" value="1"/>
</dbReference>
<dbReference type="Pfam" id="PF01926">
    <property type="entry name" value="MMR_HSR1"/>
    <property type="match status" value="2"/>
</dbReference>
<dbReference type="PIRSF" id="PIRSF006485">
    <property type="entry name" value="GTP-binding_EngA"/>
    <property type="match status" value="1"/>
</dbReference>
<dbReference type="SUPFAM" id="SSF52540">
    <property type="entry name" value="P-loop containing nucleoside triphosphate hydrolases"/>
    <property type="match status" value="2"/>
</dbReference>
<dbReference type="PROSITE" id="PS51712">
    <property type="entry name" value="G_ENGA"/>
    <property type="match status" value="2"/>
</dbReference>
<comment type="function">
    <text evidence="1">GTPase that plays an essential role in the late steps of ribosome biogenesis.</text>
</comment>
<comment type="subunit">
    <text evidence="1">Associates with the 50S ribosomal subunit.</text>
</comment>
<comment type="similarity">
    <text evidence="1">Belongs to the TRAFAC class TrmE-Era-EngA-EngB-Septin-like GTPase superfamily. EngA (Der) GTPase family.</text>
</comment>
<organism>
    <name type="scientific">Latilactobacillus sakei subsp. sakei (strain 23K)</name>
    <name type="common">Lactobacillus sakei subsp. sakei</name>
    <dbReference type="NCBI Taxonomy" id="314315"/>
    <lineage>
        <taxon>Bacteria</taxon>
        <taxon>Bacillati</taxon>
        <taxon>Bacillota</taxon>
        <taxon>Bacilli</taxon>
        <taxon>Lactobacillales</taxon>
        <taxon>Lactobacillaceae</taxon>
        <taxon>Latilactobacillus</taxon>
    </lineage>
</organism>
<gene>
    <name evidence="1" type="primary">der</name>
    <name type="synonym">engA</name>
    <name type="ordered locus">LCA_1016</name>
</gene>
<evidence type="ECO:0000255" key="1">
    <source>
        <dbReference type="HAMAP-Rule" id="MF_00195"/>
    </source>
</evidence>
<accession>Q38WW3</accession>
<name>DER_LATSS</name>
<keyword id="KW-0342">GTP-binding</keyword>
<keyword id="KW-0547">Nucleotide-binding</keyword>
<keyword id="KW-1185">Reference proteome</keyword>
<keyword id="KW-0677">Repeat</keyword>
<keyword id="KW-0690">Ribosome biogenesis</keyword>
<sequence>MSKPVIAIVGRPNVGKSTIFNRIAGERISIVEDTPGVTRDRIYTASEWLGHEFSLIDTGGIEISDAPFMEQIKQQAEIAIDEADVIIFLVSAREGVTDADERVAQILYRAEKPILLGVNKADNPEQRQDIFDFYSLGFGDPIPVSGAHGQGVGDLLDAAVAKFPTDLEEEDDDSIKFSLIGRPNVGKSSLVNAMLKEDRVIVSQIEGTTRDAIDTKFMAENNQEFTMIDTAGIRKRGKVYENTEKYAVMRALRAIDRSDVVLVVLNAEEGIREQDKKVAGYAHEAGRGIIIVVNKWDTLEKDNHTMKEFEDHIRNQFQYLDYAPIIFVSAKTGVRLQNLPAMIELVSENQNRRIQSALLNDVLMEATTVTPTPAINGKRLRIYYMTQVAVQPPTFVVFVNDINLLHFSYQRFLKNQLRKTFDFTGTPIHLIPRQRK</sequence>
<proteinExistence type="inferred from homology"/>
<reference key="1">
    <citation type="journal article" date="2005" name="Nat. Biotechnol.">
        <title>The complete genome sequence of the meat-borne lactic acid bacterium Lactobacillus sakei 23K.</title>
        <authorList>
            <person name="Chaillou S."/>
            <person name="Champomier-Verges M.-C."/>
            <person name="Cornet M."/>
            <person name="Crutz-Le Coq A.-M."/>
            <person name="Dudez A.-M."/>
            <person name="Martin V."/>
            <person name="Beaufils S."/>
            <person name="Darbon-Rongere E."/>
            <person name="Bossy R."/>
            <person name="Loux V."/>
            <person name="Zagorec M."/>
        </authorList>
    </citation>
    <scope>NUCLEOTIDE SEQUENCE [LARGE SCALE GENOMIC DNA]</scope>
    <source>
        <strain>23K</strain>
    </source>
</reference>
<feature type="chain" id="PRO_1000011652" description="GTPase Der">
    <location>
        <begin position="1"/>
        <end position="436"/>
    </location>
</feature>
<feature type="domain" description="EngA-type G 1">
    <location>
        <begin position="4"/>
        <end position="167"/>
    </location>
</feature>
<feature type="domain" description="EngA-type G 2">
    <location>
        <begin position="175"/>
        <end position="351"/>
    </location>
</feature>
<feature type="domain" description="KH-like" evidence="1">
    <location>
        <begin position="352"/>
        <end position="436"/>
    </location>
</feature>
<feature type="binding site" evidence="1">
    <location>
        <begin position="10"/>
        <end position="17"/>
    </location>
    <ligand>
        <name>GTP</name>
        <dbReference type="ChEBI" id="CHEBI:37565"/>
        <label>1</label>
    </ligand>
</feature>
<feature type="binding site" evidence="1">
    <location>
        <begin position="57"/>
        <end position="61"/>
    </location>
    <ligand>
        <name>GTP</name>
        <dbReference type="ChEBI" id="CHEBI:37565"/>
        <label>1</label>
    </ligand>
</feature>
<feature type="binding site" evidence="1">
    <location>
        <begin position="119"/>
        <end position="122"/>
    </location>
    <ligand>
        <name>GTP</name>
        <dbReference type="ChEBI" id="CHEBI:37565"/>
        <label>1</label>
    </ligand>
</feature>
<feature type="binding site" evidence="1">
    <location>
        <begin position="181"/>
        <end position="188"/>
    </location>
    <ligand>
        <name>GTP</name>
        <dbReference type="ChEBI" id="CHEBI:37565"/>
        <label>2</label>
    </ligand>
</feature>
<feature type="binding site" evidence="1">
    <location>
        <begin position="229"/>
        <end position="233"/>
    </location>
    <ligand>
        <name>GTP</name>
        <dbReference type="ChEBI" id="CHEBI:37565"/>
        <label>2</label>
    </ligand>
</feature>
<feature type="binding site" evidence="1">
    <location>
        <begin position="294"/>
        <end position="297"/>
    </location>
    <ligand>
        <name>GTP</name>
        <dbReference type="ChEBI" id="CHEBI:37565"/>
        <label>2</label>
    </ligand>
</feature>